<evidence type="ECO:0000250" key="1"/>
<evidence type="ECO:0000255" key="2">
    <source>
        <dbReference type="PROSITE-ProRule" id="PRU00159"/>
    </source>
</evidence>
<evidence type="ECO:0000255" key="3">
    <source>
        <dbReference type="PROSITE-ProRule" id="PRU10027"/>
    </source>
</evidence>
<evidence type="ECO:0000256" key="4">
    <source>
        <dbReference type="SAM" id="MobiDB-lite"/>
    </source>
</evidence>
<evidence type="ECO:0000305" key="5"/>
<protein>
    <recommendedName>
        <fullName>Cyclin-dependent kinase 7</fullName>
        <ecNumber>2.7.11.22</ecNumber>
        <ecNumber>2.7.11.23</ecNumber>
    </recommendedName>
    <alternativeName>
        <fullName>CDK-activating kinase</fullName>
        <shortName>CAK</shortName>
    </alternativeName>
    <alternativeName>
        <fullName>Cell division protein kinase 7</fullName>
    </alternativeName>
    <alternativeName>
        <fullName>MO15 homolog</fullName>
    </alternativeName>
</protein>
<comment type="function">
    <text evidence="1">Catalytic part of CAK which activates cyclin-associated CDK1/CDK2/CDK4 by threonine phosphorylation, thereby allowing MPF activation.</text>
</comment>
<comment type="catalytic activity">
    <reaction>
        <text>L-seryl-[protein] + ATP = O-phospho-L-seryl-[protein] + ADP + H(+)</text>
        <dbReference type="Rhea" id="RHEA:17989"/>
        <dbReference type="Rhea" id="RHEA-COMP:9863"/>
        <dbReference type="Rhea" id="RHEA-COMP:11604"/>
        <dbReference type="ChEBI" id="CHEBI:15378"/>
        <dbReference type="ChEBI" id="CHEBI:29999"/>
        <dbReference type="ChEBI" id="CHEBI:30616"/>
        <dbReference type="ChEBI" id="CHEBI:83421"/>
        <dbReference type="ChEBI" id="CHEBI:456216"/>
        <dbReference type="EC" id="2.7.11.22"/>
    </reaction>
</comment>
<comment type="catalytic activity">
    <reaction>
        <text>L-threonyl-[protein] + ATP = O-phospho-L-threonyl-[protein] + ADP + H(+)</text>
        <dbReference type="Rhea" id="RHEA:46608"/>
        <dbReference type="Rhea" id="RHEA-COMP:11060"/>
        <dbReference type="Rhea" id="RHEA-COMP:11605"/>
        <dbReference type="ChEBI" id="CHEBI:15378"/>
        <dbReference type="ChEBI" id="CHEBI:30013"/>
        <dbReference type="ChEBI" id="CHEBI:30616"/>
        <dbReference type="ChEBI" id="CHEBI:61977"/>
        <dbReference type="ChEBI" id="CHEBI:456216"/>
        <dbReference type="EC" id="2.7.11.22"/>
    </reaction>
</comment>
<comment type="catalytic activity">
    <reaction>
        <text>[DNA-directed RNA polymerase] + ATP = phospho-[DNA-directed RNA polymerase] + ADP + H(+)</text>
        <dbReference type="Rhea" id="RHEA:10216"/>
        <dbReference type="Rhea" id="RHEA-COMP:11321"/>
        <dbReference type="Rhea" id="RHEA-COMP:11322"/>
        <dbReference type="ChEBI" id="CHEBI:15378"/>
        <dbReference type="ChEBI" id="CHEBI:30616"/>
        <dbReference type="ChEBI" id="CHEBI:43176"/>
        <dbReference type="ChEBI" id="CHEBI:68546"/>
        <dbReference type="ChEBI" id="CHEBI:456216"/>
        <dbReference type="EC" id="2.7.11.23"/>
    </reaction>
</comment>
<comment type="subunit">
    <text evidence="1">Probably associates with cyclin H and mat1 to form a multimeric active enzyme.</text>
</comment>
<comment type="subcellular location">
    <subcellularLocation>
        <location evidence="1">Nucleus</location>
    </subcellularLocation>
</comment>
<comment type="developmental stage">
    <text>Only expressed during vegetative cell growth.</text>
</comment>
<comment type="similarity">
    <text evidence="5">Belongs to the protein kinase superfamily. CMGC Ser/Thr protein kinase family. CDC2/CDKX subfamily.</text>
</comment>
<feature type="chain" id="PRO_0000085796" description="Cyclin-dependent kinase 7">
    <location>
        <begin position="1"/>
        <end position="360"/>
    </location>
</feature>
<feature type="domain" description="Protein kinase" evidence="2">
    <location>
        <begin position="4"/>
        <end position="288"/>
    </location>
</feature>
<feature type="region of interest" description="Disordered" evidence="4">
    <location>
        <begin position="333"/>
        <end position="360"/>
    </location>
</feature>
<feature type="compositionally biased region" description="Low complexity" evidence="4">
    <location>
        <begin position="333"/>
        <end position="342"/>
    </location>
</feature>
<feature type="compositionally biased region" description="Polar residues" evidence="4">
    <location>
        <begin position="350"/>
        <end position="360"/>
    </location>
</feature>
<feature type="active site" description="Proton acceptor" evidence="2 3">
    <location>
        <position position="130"/>
    </location>
</feature>
<feature type="binding site" evidence="2">
    <location>
        <begin position="10"/>
        <end position="18"/>
    </location>
    <ligand>
        <name>ATP</name>
        <dbReference type="ChEBI" id="CHEBI:30616"/>
    </ligand>
</feature>
<feature type="binding site" evidence="2">
    <location>
        <position position="33"/>
    </location>
    <ligand>
        <name>ATP</name>
        <dbReference type="ChEBI" id="CHEBI:30616"/>
    </ligand>
</feature>
<feature type="modified residue" description="Phosphoserine" evidence="1">
    <location>
        <position position="157"/>
    </location>
</feature>
<feature type="modified residue" description="Phosphoserine" evidence="1">
    <location>
        <position position="163"/>
    </location>
</feature>
<feature type="sequence conflict" description="In Ref. 1; AAB35208." evidence="5" ref="1">
    <original>V</original>
    <variation>VKK</variation>
    <location>
        <position position="360"/>
    </location>
</feature>
<gene>
    <name type="primary">cdk7</name>
    <name type="synonym">cdcC</name>
    <name type="synonym">cdcD</name>
    <name type="synonym">mo15</name>
    <name type="ORF">DDB_G0285417</name>
</gene>
<keyword id="KW-0067">ATP-binding</keyword>
<keyword id="KW-0131">Cell cycle</keyword>
<keyword id="KW-0132">Cell division</keyword>
<keyword id="KW-0418">Kinase</keyword>
<keyword id="KW-0469">Meiosis</keyword>
<keyword id="KW-0547">Nucleotide-binding</keyword>
<keyword id="KW-0539">Nucleus</keyword>
<keyword id="KW-0597">Phosphoprotein</keyword>
<keyword id="KW-1185">Reference proteome</keyword>
<keyword id="KW-0723">Serine/threonine-protein kinase</keyword>
<keyword id="KW-0808">Transferase</keyword>
<organism>
    <name type="scientific">Dictyostelium discoideum</name>
    <name type="common">Social amoeba</name>
    <dbReference type="NCBI Taxonomy" id="44689"/>
    <lineage>
        <taxon>Eukaryota</taxon>
        <taxon>Amoebozoa</taxon>
        <taxon>Evosea</taxon>
        <taxon>Eumycetozoa</taxon>
        <taxon>Dictyostelia</taxon>
        <taxon>Dictyosteliales</taxon>
        <taxon>Dictyosteliaceae</taxon>
        <taxon>Dictyostelium</taxon>
    </lineage>
</organism>
<proteinExistence type="evidence at transcript level"/>
<sequence>MDKYNIEALIGEGTYGVVSRATVKATGQIVAIKKIRKILIQNQTDDGINFSAIREIKILQELKHDNVVNLLDIFAHKSNVYLVFELMQWDLQEVIEDKSIILKPADIKSYMKMLLQGIEACHRNWVLHRDLKPNNLLMSINGDLKLADFGLARQYGSPNKVFSPQAVTIFYRAPELLFGAKSYGPSVDIWSIGCIFAELMLRTPYLPGTGEIDQLRKICSALGTPNESNWPGVTCLPNYIKFTDHPATPFKQLFTAASDEAIDLISKMLLFNPSNRISAADALNHPYFTSGVKHTNPADLPVPFAKKASLLQQRQVLAQVQQQLLQKQQQQQQQQQQQIQSQPEPIQVDNVEQTQQAQQV</sequence>
<dbReference type="EC" id="2.7.11.22"/>
<dbReference type="EC" id="2.7.11.23"/>
<dbReference type="EMBL" id="S79590">
    <property type="protein sequence ID" value="AAB35208.2"/>
    <property type="molecule type" value="mRNA"/>
</dbReference>
<dbReference type="EMBL" id="AAFI02000079">
    <property type="protein sequence ID" value="EAL64546.1"/>
    <property type="molecule type" value="Genomic_DNA"/>
</dbReference>
<dbReference type="RefSeq" id="XP_638229.1">
    <property type="nucleotide sequence ID" value="XM_633137.1"/>
</dbReference>
<dbReference type="SMR" id="P54685"/>
<dbReference type="FunCoup" id="P54685">
    <property type="interactions" value="860"/>
</dbReference>
<dbReference type="STRING" id="44689.P54685"/>
<dbReference type="PaxDb" id="44689-DDB0191429"/>
<dbReference type="EnsemblProtists" id="EAL64546">
    <property type="protein sequence ID" value="EAL64546"/>
    <property type="gene ID" value="DDB_G0285417"/>
</dbReference>
<dbReference type="GeneID" id="8625277"/>
<dbReference type="KEGG" id="ddi:DDB_G0285417"/>
<dbReference type="dictyBase" id="DDB_G0285417">
    <property type="gene designation" value="cdk7"/>
</dbReference>
<dbReference type="VEuPathDB" id="AmoebaDB:DDB_G0285417"/>
<dbReference type="eggNOG" id="KOG0659">
    <property type="taxonomic scope" value="Eukaryota"/>
</dbReference>
<dbReference type="HOGENOM" id="CLU_000288_181_1_1"/>
<dbReference type="InParanoid" id="P54685"/>
<dbReference type="OMA" id="GIHHCHR"/>
<dbReference type="PhylomeDB" id="P54685"/>
<dbReference type="BRENDA" id="2.7.11.22">
    <property type="organism ID" value="1939"/>
</dbReference>
<dbReference type="Reactome" id="R-DDI-113418">
    <property type="pathway name" value="Formation of the Early Elongation Complex"/>
</dbReference>
<dbReference type="Reactome" id="R-DDI-5696395">
    <property type="pathway name" value="Formation of Incision Complex in GG-NER"/>
</dbReference>
<dbReference type="Reactome" id="R-DDI-674695">
    <property type="pathway name" value="RNA Polymerase II Pre-transcription Events"/>
</dbReference>
<dbReference type="Reactome" id="R-DDI-6781823">
    <property type="pathway name" value="Formation of TC-NER Pre-Incision Complex"/>
</dbReference>
<dbReference type="Reactome" id="R-DDI-6782135">
    <property type="pathway name" value="Dual incision in TC-NER"/>
</dbReference>
<dbReference type="Reactome" id="R-DDI-6782210">
    <property type="pathway name" value="Gap-filling DNA repair synthesis and ligation in TC-NER"/>
</dbReference>
<dbReference type="Reactome" id="R-DDI-6796648">
    <property type="pathway name" value="TP53 Regulates Transcription of DNA Repair Genes"/>
</dbReference>
<dbReference type="Reactome" id="R-DDI-6807505">
    <property type="pathway name" value="RNA polymerase II transcribes snRNA genes"/>
</dbReference>
<dbReference type="Reactome" id="R-DDI-72086">
    <property type="pathway name" value="mRNA Capping"/>
</dbReference>
<dbReference type="Reactome" id="R-DDI-73772">
    <property type="pathway name" value="RNA Polymerase I Promoter Escape"/>
</dbReference>
<dbReference type="Reactome" id="R-DDI-73776">
    <property type="pathway name" value="RNA Polymerase II Promoter Escape"/>
</dbReference>
<dbReference type="Reactome" id="R-DDI-73779">
    <property type="pathway name" value="RNA Polymerase II Transcription Pre-Initiation And Promoter Opening"/>
</dbReference>
<dbReference type="Reactome" id="R-DDI-75953">
    <property type="pathway name" value="RNA Polymerase II Transcription Initiation"/>
</dbReference>
<dbReference type="Reactome" id="R-DDI-76042">
    <property type="pathway name" value="RNA Polymerase II Transcription Initiation And Promoter Clearance"/>
</dbReference>
<dbReference type="Reactome" id="R-DDI-77075">
    <property type="pathway name" value="RNA Pol II CTD phosphorylation and interaction with CE"/>
</dbReference>
<dbReference type="PRO" id="PR:P54685"/>
<dbReference type="Proteomes" id="UP000002195">
    <property type="component" value="Chromosome 4"/>
</dbReference>
<dbReference type="GO" id="GO:0005737">
    <property type="term" value="C:cytoplasm"/>
    <property type="evidence" value="ECO:0000318"/>
    <property type="project" value="GO_Central"/>
</dbReference>
<dbReference type="GO" id="GO:0005634">
    <property type="term" value="C:nucleus"/>
    <property type="evidence" value="ECO:0000318"/>
    <property type="project" value="GO_Central"/>
</dbReference>
<dbReference type="GO" id="GO:0070985">
    <property type="term" value="C:transcription factor TFIIK complex"/>
    <property type="evidence" value="ECO:0000318"/>
    <property type="project" value="GO_Central"/>
</dbReference>
<dbReference type="GO" id="GO:0005524">
    <property type="term" value="F:ATP binding"/>
    <property type="evidence" value="ECO:0007669"/>
    <property type="project" value="UniProtKB-KW"/>
</dbReference>
<dbReference type="GO" id="GO:0004693">
    <property type="term" value="F:cyclin-dependent protein serine/threonine kinase activity"/>
    <property type="evidence" value="ECO:0000318"/>
    <property type="project" value="GO_Central"/>
</dbReference>
<dbReference type="GO" id="GO:0106310">
    <property type="term" value="F:protein serine kinase activity"/>
    <property type="evidence" value="ECO:0007669"/>
    <property type="project" value="RHEA"/>
</dbReference>
<dbReference type="GO" id="GO:0008353">
    <property type="term" value="F:RNA polymerase II CTD heptapeptide repeat kinase activity"/>
    <property type="evidence" value="ECO:0000318"/>
    <property type="project" value="GO_Central"/>
</dbReference>
<dbReference type="GO" id="GO:0051301">
    <property type="term" value="P:cell division"/>
    <property type="evidence" value="ECO:0007669"/>
    <property type="project" value="UniProtKB-KW"/>
</dbReference>
<dbReference type="GO" id="GO:0051321">
    <property type="term" value="P:meiotic cell cycle"/>
    <property type="evidence" value="ECO:0007669"/>
    <property type="project" value="UniProtKB-KW"/>
</dbReference>
<dbReference type="GO" id="GO:0045944">
    <property type="term" value="P:positive regulation of transcription by RNA polymerase II"/>
    <property type="evidence" value="ECO:0000318"/>
    <property type="project" value="GO_Central"/>
</dbReference>
<dbReference type="GO" id="GO:0051726">
    <property type="term" value="P:regulation of cell cycle"/>
    <property type="evidence" value="ECO:0000318"/>
    <property type="project" value="GO_Central"/>
</dbReference>
<dbReference type="CDD" id="cd07841">
    <property type="entry name" value="STKc_CDK7"/>
    <property type="match status" value="1"/>
</dbReference>
<dbReference type="FunFam" id="3.30.200.20:FF:000554">
    <property type="entry name" value="CMGC/CDK/CDK7 protein kinase"/>
    <property type="match status" value="1"/>
</dbReference>
<dbReference type="FunFam" id="1.10.510.10:FF:000097">
    <property type="entry name" value="Putative cyclin-dependent kinase 7"/>
    <property type="match status" value="1"/>
</dbReference>
<dbReference type="Gene3D" id="3.30.200.20">
    <property type="entry name" value="Phosphorylase Kinase, domain 1"/>
    <property type="match status" value="1"/>
</dbReference>
<dbReference type="Gene3D" id="1.10.510.10">
    <property type="entry name" value="Transferase(Phosphotransferase) domain 1"/>
    <property type="match status" value="1"/>
</dbReference>
<dbReference type="InterPro" id="IPR050108">
    <property type="entry name" value="CDK"/>
</dbReference>
<dbReference type="InterPro" id="IPR037770">
    <property type="entry name" value="CDK7"/>
</dbReference>
<dbReference type="InterPro" id="IPR011009">
    <property type="entry name" value="Kinase-like_dom_sf"/>
</dbReference>
<dbReference type="InterPro" id="IPR000719">
    <property type="entry name" value="Prot_kinase_dom"/>
</dbReference>
<dbReference type="InterPro" id="IPR017441">
    <property type="entry name" value="Protein_kinase_ATP_BS"/>
</dbReference>
<dbReference type="InterPro" id="IPR008271">
    <property type="entry name" value="Ser/Thr_kinase_AS"/>
</dbReference>
<dbReference type="PANTHER" id="PTHR24056">
    <property type="entry name" value="CELL DIVISION PROTEIN KINASE"/>
    <property type="match status" value="1"/>
</dbReference>
<dbReference type="PANTHER" id="PTHR24056:SF0">
    <property type="entry name" value="CYCLIN-DEPENDENT KINASE 7"/>
    <property type="match status" value="1"/>
</dbReference>
<dbReference type="Pfam" id="PF00069">
    <property type="entry name" value="Pkinase"/>
    <property type="match status" value="1"/>
</dbReference>
<dbReference type="SMART" id="SM00220">
    <property type="entry name" value="S_TKc"/>
    <property type="match status" value="1"/>
</dbReference>
<dbReference type="SUPFAM" id="SSF56112">
    <property type="entry name" value="Protein kinase-like (PK-like)"/>
    <property type="match status" value="1"/>
</dbReference>
<dbReference type="PROSITE" id="PS00107">
    <property type="entry name" value="PROTEIN_KINASE_ATP"/>
    <property type="match status" value="1"/>
</dbReference>
<dbReference type="PROSITE" id="PS50011">
    <property type="entry name" value="PROTEIN_KINASE_DOM"/>
    <property type="match status" value="1"/>
</dbReference>
<dbReference type="PROSITE" id="PS00108">
    <property type="entry name" value="PROTEIN_KINASE_ST"/>
    <property type="match status" value="1"/>
</dbReference>
<reference key="1">
    <citation type="journal article" date="1995" name="Biochem. Cell Biol.">
        <title>A Dictyostelium discoideum gene, which is highly related to mo15 from Xenopus, is expressed during growth but not during development.</title>
        <authorList>
            <person name="Michaelis C.E."/>
            <person name="Luo Q."/>
            <person name="Weeks G."/>
        </authorList>
    </citation>
    <scope>NUCLEOTIDE SEQUENCE [MRNA]</scope>
    <source>
        <strain>V12M2</strain>
    </source>
</reference>
<reference key="2">
    <citation type="journal article" date="2005" name="Nature">
        <title>The genome of the social amoeba Dictyostelium discoideum.</title>
        <authorList>
            <person name="Eichinger L."/>
            <person name="Pachebat J.A."/>
            <person name="Gloeckner G."/>
            <person name="Rajandream M.A."/>
            <person name="Sucgang R."/>
            <person name="Berriman M."/>
            <person name="Song J."/>
            <person name="Olsen R."/>
            <person name="Szafranski K."/>
            <person name="Xu Q."/>
            <person name="Tunggal B."/>
            <person name="Kummerfeld S."/>
            <person name="Madera M."/>
            <person name="Konfortov B.A."/>
            <person name="Rivero F."/>
            <person name="Bankier A.T."/>
            <person name="Lehmann R."/>
            <person name="Hamlin N."/>
            <person name="Davies R."/>
            <person name="Gaudet P."/>
            <person name="Fey P."/>
            <person name="Pilcher K."/>
            <person name="Chen G."/>
            <person name="Saunders D."/>
            <person name="Sodergren E.J."/>
            <person name="Davis P."/>
            <person name="Kerhornou A."/>
            <person name="Nie X."/>
            <person name="Hall N."/>
            <person name="Anjard C."/>
            <person name="Hemphill L."/>
            <person name="Bason N."/>
            <person name="Farbrother P."/>
            <person name="Desany B."/>
            <person name="Just E."/>
            <person name="Morio T."/>
            <person name="Rost R."/>
            <person name="Churcher C.M."/>
            <person name="Cooper J."/>
            <person name="Haydock S."/>
            <person name="van Driessche N."/>
            <person name="Cronin A."/>
            <person name="Goodhead I."/>
            <person name="Muzny D.M."/>
            <person name="Mourier T."/>
            <person name="Pain A."/>
            <person name="Lu M."/>
            <person name="Harper D."/>
            <person name="Lindsay R."/>
            <person name="Hauser H."/>
            <person name="James K.D."/>
            <person name="Quiles M."/>
            <person name="Madan Babu M."/>
            <person name="Saito T."/>
            <person name="Buchrieser C."/>
            <person name="Wardroper A."/>
            <person name="Felder M."/>
            <person name="Thangavelu M."/>
            <person name="Johnson D."/>
            <person name="Knights A."/>
            <person name="Loulseged H."/>
            <person name="Mungall K.L."/>
            <person name="Oliver K."/>
            <person name="Price C."/>
            <person name="Quail M.A."/>
            <person name="Urushihara H."/>
            <person name="Hernandez J."/>
            <person name="Rabbinowitsch E."/>
            <person name="Steffen D."/>
            <person name="Sanders M."/>
            <person name="Ma J."/>
            <person name="Kohara Y."/>
            <person name="Sharp S."/>
            <person name="Simmonds M.N."/>
            <person name="Spiegler S."/>
            <person name="Tivey A."/>
            <person name="Sugano S."/>
            <person name="White B."/>
            <person name="Walker D."/>
            <person name="Woodward J.R."/>
            <person name="Winckler T."/>
            <person name="Tanaka Y."/>
            <person name="Shaulsky G."/>
            <person name="Schleicher M."/>
            <person name="Weinstock G.M."/>
            <person name="Rosenthal A."/>
            <person name="Cox E.C."/>
            <person name="Chisholm R.L."/>
            <person name="Gibbs R.A."/>
            <person name="Loomis W.F."/>
            <person name="Platzer M."/>
            <person name="Kay R.R."/>
            <person name="Williams J.G."/>
            <person name="Dear P.H."/>
            <person name="Noegel A.A."/>
            <person name="Barrell B.G."/>
            <person name="Kuspa A."/>
        </authorList>
    </citation>
    <scope>NUCLEOTIDE SEQUENCE [LARGE SCALE GENOMIC DNA]</scope>
    <source>
        <strain>AX4</strain>
    </source>
</reference>
<accession>P54685</accession>
<accession>Q54MR4</accession>
<name>CDK7_DICDI</name>